<evidence type="ECO:0000250" key="1">
    <source>
        <dbReference type="UniProtKB" id="P0ACI0"/>
    </source>
</evidence>
<evidence type="ECO:0000255" key="2">
    <source>
        <dbReference type="PROSITE-ProRule" id="PRU00593"/>
    </source>
</evidence>
<evidence type="ECO:0000269" key="3">
    <source>
    </source>
</evidence>
<evidence type="ECO:0000269" key="4">
    <source>
    </source>
</evidence>
<evidence type="ECO:0000269" key="5">
    <source>
    </source>
</evidence>
<evidence type="ECO:0000303" key="6">
    <source>
    </source>
</evidence>
<evidence type="ECO:0000305" key="7"/>
<evidence type="ECO:0000312" key="8">
    <source>
        <dbReference type="EMBL" id="AAL23401.1"/>
    </source>
</evidence>
<evidence type="ECO:0000312" key="9">
    <source>
        <dbReference type="Proteomes" id="UP000001014"/>
    </source>
</evidence>
<comment type="function">
    <text evidence="1 3 5">Transcriptional regulator (PubMed:18487336, PubMed:31501286). Represses transcription of genes belonging to the flagellar regulon, including flhD, flhB and fliC; probably thereby leading to repression of motility (PubMed:31501286). Binds to regulatory regions of target genes, including the promoters of the flhDC operon and of P-type ATPase mgtA (PubMed:18487336, PubMed:31501286). Involved in post-transcriptional regulation of expression (PubMed:31501286). Represses expression of the flhDC operon in a post-transcriptional manner (PubMed:31501286). Binds to the right arm of the replication origin oriC of the chromosome (By similarity). Rob binding may influence the formation of the nucleoprotein structure, required for oriC function in the initiation of replication (By similarity).</text>
</comment>
<comment type="induction">
    <text evidence="4">Transcription is slightly reduced by salicylic acid, and significantly reduced by decanoate.</text>
</comment>
<comment type="disruption phenotype">
    <text evidence="3">Deletion reduces transcription of mgtA during late exponential phase of liquid culture.</text>
</comment>
<comment type="miscellaneous">
    <text evidence="3">Overexpression of Rob confers resistance to cyclohexane.</text>
</comment>
<dbReference type="EMBL" id="AE006468">
    <property type="protein sequence ID" value="AAL23401.1"/>
    <property type="molecule type" value="Genomic_DNA"/>
</dbReference>
<dbReference type="RefSeq" id="NP_463442.1">
    <property type="nucleotide sequence ID" value="NC_003197.2"/>
</dbReference>
<dbReference type="SMR" id="Q8ZJU7"/>
<dbReference type="STRING" id="99287.STM4586"/>
<dbReference type="PaxDb" id="99287-STM4586"/>
<dbReference type="GeneID" id="1256112"/>
<dbReference type="KEGG" id="stm:STM4586"/>
<dbReference type="PATRIC" id="fig|99287.12.peg.4829"/>
<dbReference type="HOGENOM" id="CLU_000445_81_1_6"/>
<dbReference type="OMA" id="WRQYLGE"/>
<dbReference type="PhylomeDB" id="Q8ZJU7"/>
<dbReference type="BioCyc" id="SENT99287:STM4586-MONOMER"/>
<dbReference type="Proteomes" id="UP000001014">
    <property type="component" value="Chromosome"/>
</dbReference>
<dbReference type="GO" id="GO:0005829">
    <property type="term" value="C:cytosol"/>
    <property type="evidence" value="ECO:0000318"/>
    <property type="project" value="GO_Central"/>
</dbReference>
<dbReference type="GO" id="GO:0001108">
    <property type="term" value="F:bacterial-type RNA polymerase holo enzyme binding"/>
    <property type="evidence" value="ECO:0000318"/>
    <property type="project" value="GO_Central"/>
</dbReference>
<dbReference type="GO" id="GO:0003700">
    <property type="term" value="F:DNA-binding transcription factor activity"/>
    <property type="evidence" value="ECO:0007669"/>
    <property type="project" value="InterPro"/>
</dbReference>
<dbReference type="GO" id="GO:0043565">
    <property type="term" value="F:sequence-specific DNA binding"/>
    <property type="evidence" value="ECO:0000318"/>
    <property type="project" value="GO_Central"/>
</dbReference>
<dbReference type="GO" id="GO:0006355">
    <property type="term" value="P:regulation of DNA-templated transcription"/>
    <property type="evidence" value="ECO:0000318"/>
    <property type="project" value="GO_Central"/>
</dbReference>
<dbReference type="FunFam" id="1.10.10.60:FF:000013">
    <property type="entry name" value="DNA-binding transcriptional activator MarA"/>
    <property type="match status" value="1"/>
</dbReference>
<dbReference type="FunFam" id="1.10.10.60:FF:000030">
    <property type="entry name" value="DNA-binding transcriptional regulator SoxS"/>
    <property type="match status" value="1"/>
</dbReference>
<dbReference type="Gene3D" id="1.10.10.60">
    <property type="entry name" value="Homeodomain-like"/>
    <property type="match status" value="2"/>
</dbReference>
<dbReference type="Gene3D" id="3.20.80.10">
    <property type="entry name" value="Regulatory factor, effector binding domain"/>
    <property type="match status" value="1"/>
</dbReference>
<dbReference type="InterPro" id="IPR010499">
    <property type="entry name" value="AraC_E-bd"/>
</dbReference>
<dbReference type="InterPro" id="IPR029442">
    <property type="entry name" value="GyrI-like"/>
</dbReference>
<dbReference type="InterPro" id="IPR009057">
    <property type="entry name" value="Homeodomain-like_sf"/>
</dbReference>
<dbReference type="InterPro" id="IPR018060">
    <property type="entry name" value="HTH_AraC"/>
</dbReference>
<dbReference type="InterPro" id="IPR018062">
    <property type="entry name" value="HTH_AraC-typ_CS"/>
</dbReference>
<dbReference type="InterPro" id="IPR050959">
    <property type="entry name" value="MarA-like"/>
</dbReference>
<dbReference type="InterPro" id="IPR011256">
    <property type="entry name" value="Reg_factor_effector_dom_sf"/>
</dbReference>
<dbReference type="InterPro" id="IPR020449">
    <property type="entry name" value="Tscrpt_reg_AraC-type_HTH"/>
</dbReference>
<dbReference type="NCBIfam" id="NF011701">
    <property type="entry name" value="PRK15121.1"/>
    <property type="match status" value="1"/>
</dbReference>
<dbReference type="NCBIfam" id="NF012228">
    <property type="entry name" value="RobA_TF"/>
    <property type="match status" value="1"/>
</dbReference>
<dbReference type="PANTHER" id="PTHR47504">
    <property type="entry name" value="RIGHT ORIGIN-BINDING PROTEIN"/>
    <property type="match status" value="1"/>
</dbReference>
<dbReference type="PANTHER" id="PTHR47504:SF5">
    <property type="entry name" value="RIGHT ORIGIN-BINDING PROTEIN"/>
    <property type="match status" value="1"/>
</dbReference>
<dbReference type="Pfam" id="PF06445">
    <property type="entry name" value="GyrI-like"/>
    <property type="match status" value="1"/>
</dbReference>
<dbReference type="Pfam" id="PF12833">
    <property type="entry name" value="HTH_18"/>
    <property type="match status" value="1"/>
</dbReference>
<dbReference type="PRINTS" id="PR00032">
    <property type="entry name" value="HTHARAC"/>
</dbReference>
<dbReference type="SMART" id="SM00871">
    <property type="entry name" value="AraC_E_bind"/>
    <property type="match status" value="1"/>
</dbReference>
<dbReference type="SMART" id="SM00342">
    <property type="entry name" value="HTH_ARAC"/>
    <property type="match status" value="1"/>
</dbReference>
<dbReference type="SUPFAM" id="SSF46689">
    <property type="entry name" value="Homeodomain-like"/>
    <property type="match status" value="2"/>
</dbReference>
<dbReference type="SUPFAM" id="SSF55136">
    <property type="entry name" value="Probable bacterial effector-binding domain"/>
    <property type="match status" value="1"/>
</dbReference>
<dbReference type="PROSITE" id="PS00041">
    <property type="entry name" value="HTH_ARAC_FAMILY_1"/>
    <property type="match status" value="1"/>
</dbReference>
<dbReference type="PROSITE" id="PS01124">
    <property type="entry name" value="HTH_ARAC_FAMILY_2"/>
    <property type="match status" value="1"/>
</dbReference>
<keyword id="KW-0238">DNA-binding</keyword>
<keyword id="KW-1185">Reference proteome</keyword>
<keyword id="KW-0678">Repressor</keyword>
<keyword id="KW-0804">Transcription</keyword>
<keyword id="KW-0805">Transcription regulation</keyword>
<protein>
    <recommendedName>
        <fullName evidence="6">Transcriptional regulator Rob</fullName>
    </recommendedName>
    <alternativeName>
        <fullName evidence="1">Right origin-binding protein</fullName>
    </alternativeName>
</protein>
<accession>Q8ZJU7</accession>
<gene>
    <name evidence="8" type="primary">rob</name>
    <name evidence="8" type="ordered locus">STM4586</name>
</gene>
<reference evidence="9" key="1">
    <citation type="journal article" date="2001" name="Nature">
        <title>Complete genome sequence of Salmonella enterica serovar Typhimurium LT2.</title>
        <authorList>
            <person name="McClelland M."/>
            <person name="Sanderson K.E."/>
            <person name="Spieth J."/>
            <person name="Clifton S.W."/>
            <person name="Latreille P."/>
            <person name="Courtney L."/>
            <person name="Porwollik S."/>
            <person name="Ali J."/>
            <person name="Dante M."/>
            <person name="Du F."/>
            <person name="Hou S."/>
            <person name="Layman D."/>
            <person name="Leonard S."/>
            <person name="Nguyen C."/>
            <person name="Scott K."/>
            <person name="Holmes A."/>
            <person name="Grewal N."/>
            <person name="Mulvaney E."/>
            <person name="Ryan E."/>
            <person name="Sun H."/>
            <person name="Florea L."/>
            <person name="Miller W."/>
            <person name="Stoneking T."/>
            <person name="Nhan M."/>
            <person name="Waterston R."/>
            <person name="Wilson R.K."/>
        </authorList>
    </citation>
    <scope>NUCLEOTIDE SEQUENCE [LARGE SCALE GENOMIC DNA]</scope>
    <source>
        <strain evidence="9">LT2 / SGSC1412 / ATCC 700720</strain>
    </source>
</reference>
<reference evidence="7" key="2">
    <citation type="journal article" date="2008" name="J. Bacteriol.">
        <title>mgtA Expression is induced by rob overexpression and mediates a Salmonella enterica resistance phenotype.</title>
        <authorList>
            <person name="Barchiesi J."/>
            <person name="Castelli M.E."/>
            <person name="Soncini F.C."/>
            <person name="Vescovi E.G."/>
        </authorList>
    </citation>
    <scope>FUNCTION</scope>
    <scope>DISRUPTION PHENOTYPE</scope>
</reference>
<reference evidence="7" key="3">
    <citation type="journal article" date="2008" name="Microbiol. Immunol.">
        <title>Regulation of marA, soxS, rob, acrAB and micF in Salmonella enterica serovar Typhimurium.</title>
        <authorList>
            <person name="Hartog E."/>
            <person name="Ben-Shalom L."/>
            <person name="Shachar D."/>
            <person name="Matthews K.R."/>
            <person name="Yaron S."/>
        </authorList>
    </citation>
    <scope>INDUCTION BY SALICYLIC ACID AND BY DECANOATE</scope>
</reference>
<reference evidence="7" key="4">
    <citation type="journal article" date="2019" name="J. Bacteriol.">
        <title>Multidrug Resistance Regulators MarA, SoxS, Rob, and RamA Repress Flagellar Gene Expression and Motility in Salmonella enterica Serovar Typhimurium.</title>
        <authorList>
            <person name="Thota S.S."/>
            <person name="Chubiz L.M."/>
        </authorList>
    </citation>
    <scope>FUNCTION</scope>
</reference>
<organism evidence="9">
    <name type="scientific">Salmonella typhimurium (strain LT2 / SGSC1412 / ATCC 700720)</name>
    <dbReference type="NCBI Taxonomy" id="99287"/>
    <lineage>
        <taxon>Bacteria</taxon>
        <taxon>Pseudomonadati</taxon>
        <taxon>Pseudomonadota</taxon>
        <taxon>Gammaproteobacteria</taxon>
        <taxon>Enterobacterales</taxon>
        <taxon>Enterobacteriaceae</taxon>
        <taxon>Salmonella</taxon>
    </lineage>
</organism>
<feature type="chain" id="PRO_0000460560" description="Transcriptional regulator Rob">
    <location>
        <begin position="1"/>
        <end position="289"/>
    </location>
</feature>
<feature type="domain" description="HTH araC/xylS-type" evidence="2">
    <location>
        <begin position="8"/>
        <end position="106"/>
    </location>
</feature>
<feature type="DNA-binding region" description="H-T-H motif" evidence="2">
    <location>
        <begin position="25"/>
        <end position="46"/>
    </location>
</feature>
<feature type="DNA-binding region" description="H-T-H motif" evidence="2">
    <location>
        <begin position="73"/>
        <end position="96"/>
    </location>
</feature>
<name>ROB_SALTY</name>
<sequence length="289" mass="33244">MDQAGIIRDLLIWLEGHLDQPLSLDNVAAKAGYSKWHLQRMFKDVTGHAIGAYIRARRLSKSAVALRLTARPILDIALQYRFDSQQTFTRAFKKQFSQTPALYRRSSEWSAFGIRPPLRLGEFTVPEHQFVTLEDTPLLGVTQSYSCSLEQISDFRHEMRVQFWHDFLGHSPTIPPVLYGLNETRPSMEKDDEQEVFYTTALPQEQADGYVQSAHPVLLQGGEYVMFTYEGLGTGVQDFILTVYGTCMPMLNLTRRKGQDIERYYPSEDTKTGDRPINLRCEFLIPIRR</sequence>
<proteinExistence type="evidence at transcript level"/>